<proteinExistence type="inferred from homology"/>
<reference key="1">
    <citation type="journal article" date="2004" name="Nat. Biotechnol.">
        <title>Complete sequence and comparative genome analysis of the dairy bacterium Streptococcus thermophilus.</title>
        <authorList>
            <person name="Bolotin A."/>
            <person name="Quinquis B."/>
            <person name="Renault P."/>
            <person name="Sorokin A."/>
            <person name="Ehrlich S.D."/>
            <person name="Kulakauskas S."/>
            <person name="Lapidus A."/>
            <person name="Goltsman E."/>
            <person name="Mazur M."/>
            <person name="Pusch G.D."/>
            <person name="Fonstein M."/>
            <person name="Overbeek R."/>
            <person name="Kyprides N."/>
            <person name="Purnelle B."/>
            <person name="Prozzi D."/>
            <person name="Ngui K."/>
            <person name="Masuy D."/>
            <person name="Hancy F."/>
            <person name="Burteau S."/>
            <person name="Boutry M."/>
            <person name="Delcour J."/>
            <person name="Goffeau A."/>
            <person name="Hols P."/>
        </authorList>
    </citation>
    <scope>NUCLEOTIDE SEQUENCE [LARGE SCALE GENOMIC DNA]</scope>
    <source>
        <strain>CNRZ 1066</strain>
    </source>
</reference>
<comment type="function">
    <text evidence="1">Involved in the import of serine and threonine into the cell, with the concomitant import of sodium (symport system).</text>
</comment>
<comment type="catalytic activity">
    <reaction evidence="1">
        <text>L-serine(in) + Na(+)(in) = L-serine(out) + Na(+)(out)</text>
        <dbReference type="Rhea" id="RHEA:29575"/>
        <dbReference type="ChEBI" id="CHEBI:29101"/>
        <dbReference type="ChEBI" id="CHEBI:33384"/>
    </reaction>
    <physiologicalReaction direction="right-to-left" evidence="1">
        <dbReference type="Rhea" id="RHEA:29577"/>
    </physiologicalReaction>
</comment>
<comment type="catalytic activity">
    <reaction evidence="1">
        <text>L-threonine(in) + Na(+)(in) = L-threonine(out) + Na(+)(out)</text>
        <dbReference type="Rhea" id="RHEA:69999"/>
        <dbReference type="ChEBI" id="CHEBI:29101"/>
        <dbReference type="ChEBI" id="CHEBI:57926"/>
    </reaction>
    <physiologicalReaction direction="right-to-left" evidence="1">
        <dbReference type="Rhea" id="RHEA:70001"/>
    </physiologicalReaction>
</comment>
<comment type="subcellular location">
    <subcellularLocation>
        <location evidence="1">Cell membrane</location>
        <topology evidence="1">Multi-pass membrane protein</topology>
    </subcellularLocation>
</comment>
<comment type="similarity">
    <text evidence="1">Belongs to the dicarboxylate/amino acid:cation symporter (DAACS) (TC 2.A.23) family.</text>
</comment>
<accession>Q5M1F4</accession>
<feature type="chain" id="PRO_0000309151" description="Serine/threonine transporter SstT">
    <location>
        <begin position="1"/>
        <end position="402"/>
    </location>
</feature>
<feature type="transmembrane region" description="Helical" evidence="1">
    <location>
        <begin position="17"/>
        <end position="37"/>
    </location>
</feature>
<feature type="transmembrane region" description="Helical" evidence="1">
    <location>
        <begin position="44"/>
        <end position="64"/>
    </location>
</feature>
<feature type="transmembrane region" description="Helical" evidence="1">
    <location>
        <begin position="78"/>
        <end position="98"/>
    </location>
</feature>
<feature type="transmembrane region" description="Helical" evidence="1">
    <location>
        <begin position="138"/>
        <end position="158"/>
    </location>
</feature>
<feature type="transmembrane region" description="Helical" evidence="1">
    <location>
        <begin position="179"/>
        <end position="199"/>
    </location>
</feature>
<feature type="transmembrane region" description="Helical" evidence="1">
    <location>
        <begin position="212"/>
        <end position="232"/>
    </location>
</feature>
<feature type="transmembrane region" description="Helical" evidence="1">
    <location>
        <begin position="295"/>
        <end position="315"/>
    </location>
</feature>
<feature type="transmembrane region" description="Helical" evidence="1">
    <location>
        <begin position="336"/>
        <end position="356"/>
    </location>
</feature>
<name>SSTT_STRT1</name>
<protein>
    <recommendedName>
        <fullName evidence="1">Serine/threonine transporter SstT</fullName>
    </recommendedName>
    <alternativeName>
        <fullName evidence="1">Na(+)/serine-threonine symporter</fullName>
    </alternativeName>
</protein>
<sequence length="402" mass="42296">MKRFISAWNRTSLIKRIAIGVVIGAILGLLIPKITVIGLLGDMFVGGLKAIAPLLVSALVANALSQTREGQQSNMKTIIVLYLFGTFAAALTAVISHYIFPISLKLGATSATKAAAPQGVGEVFKDLMLKMVDNPINALSQANYIGVLLWAVVFGFAMRTASEHTKELLHTLSEVTSQIVRWIINLAPFGILGLVFDTISKNGVGVLADYGVLILVLVGTMTFVALVINPIIAFVMMGKNPFPLVFRSLKDSRITAFFTRSSAANIPVNLQLCEDLGLNPDTYSVSIPLGSTINMAGAAVTINVLTLAAVTTLGIEVDFATAFILSVVSTISACGASGIAGGSLLLVPVACSLFGISNDLAMQVVGVGFIVGVIQDSCETALNSSTDVLFTAVAEKSRWKKS</sequence>
<evidence type="ECO:0000255" key="1">
    <source>
        <dbReference type="HAMAP-Rule" id="MF_01582"/>
    </source>
</evidence>
<dbReference type="EMBL" id="CP000024">
    <property type="protein sequence ID" value="AAV61910.1"/>
    <property type="molecule type" value="Genomic_DNA"/>
</dbReference>
<dbReference type="RefSeq" id="WP_011226865.1">
    <property type="nucleotide sequence ID" value="NC_006449.1"/>
</dbReference>
<dbReference type="SMR" id="Q5M1F4"/>
<dbReference type="KEGG" id="stc:str0303"/>
<dbReference type="HOGENOM" id="CLU_044581_0_0_9"/>
<dbReference type="GO" id="GO:0005886">
    <property type="term" value="C:plasma membrane"/>
    <property type="evidence" value="ECO:0007669"/>
    <property type="project" value="UniProtKB-SubCell"/>
</dbReference>
<dbReference type="GO" id="GO:0005295">
    <property type="term" value="F:neutral L-amino acid:sodium symporter activity"/>
    <property type="evidence" value="ECO:0007669"/>
    <property type="project" value="TreeGrafter"/>
</dbReference>
<dbReference type="GO" id="GO:0032329">
    <property type="term" value="P:serine transport"/>
    <property type="evidence" value="ECO:0007669"/>
    <property type="project" value="InterPro"/>
</dbReference>
<dbReference type="GO" id="GO:0015826">
    <property type="term" value="P:threonine transport"/>
    <property type="evidence" value="ECO:0007669"/>
    <property type="project" value="InterPro"/>
</dbReference>
<dbReference type="FunFam" id="1.10.3860.10:FF:000003">
    <property type="entry name" value="Serine/threonine transporter sstT"/>
    <property type="match status" value="1"/>
</dbReference>
<dbReference type="Gene3D" id="1.10.3860.10">
    <property type="entry name" value="Sodium:dicarboxylate symporter"/>
    <property type="match status" value="1"/>
</dbReference>
<dbReference type="HAMAP" id="MF_01582">
    <property type="entry name" value="Ser_Thr_transp_SstT"/>
    <property type="match status" value="1"/>
</dbReference>
<dbReference type="InterPro" id="IPR001991">
    <property type="entry name" value="Na-dicarboxylate_symporter"/>
</dbReference>
<dbReference type="InterPro" id="IPR036458">
    <property type="entry name" value="Na:dicarbo_symporter_sf"/>
</dbReference>
<dbReference type="InterPro" id="IPR023025">
    <property type="entry name" value="Ser_Thr_transp_SstT"/>
</dbReference>
<dbReference type="NCBIfam" id="NF010151">
    <property type="entry name" value="PRK13628.1"/>
    <property type="match status" value="1"/>
</dbReference>
<dbReference type="PANTHER" id="PTHR42865">
    <property type="entry name" value="PROTON/GLUTAMATE-ASPARTATE SYMPORTER"/>
    <property type="match status" value="1"/>
</dbReference>
<dbReference type="PANTHER" id="PTHR42865:SF8">
    <property type="entry name" value="SERINE_THREONINE TRANSPORTER SSTT"/>
    <property type="match status" value="1"/>
</dbReference>
<dbReference type="Pfam" id="PF00375">
    <property type="entry name" value="SDF"/>
    <property type="match status" value="1"/>
</dbReference>
<dbReference type="PRINTS" id="PR00173">
    <property type="entry name" value="EDTRNSPORT"/>
</dbReference>
<dbReference type="SUPFAM" id="SSF118215">
    <property type="entry name" value="Proton glutamate symport protein"/>
    <property type="match status" value="1"/>
</dbReference>
<gene>
    <name evidence="1" type="primary">sstT</name>
    <name type="ordered locus">str0303</name>
</gene>
<keyword id="KW-0029">Amino-acid transport</keyword>
<keyword id="KW-1003">Cell membrane</keyword>
<keyword id="KW-0472">Membrane</keyword>
<keyword id="KW-0769">Symport</keyword>
<keyword id="KW-0812">Transmembrane</keyword>
<keyword id="KW-1133">Transmembrane helix</keyword>
<keyword id="KW-0813">Transport</keyword>
<organism>
    <name type="scientific">Streptococcus thermophilus (strain CNRZ 1066)</name>
    <dbReference type="NCBI Taxonomy" id="299768"/>
    <lineage>
        <taxon>Bacteria</taxon>
        <taxon>Bacillati</taxon>
        <taxon>Bacillota</taxon>
        <taxon>Bacilli</taxon>
        <taxon>Lactobacillales</taxon>
        <taxon>Streptococcaceae</taxon>
        <taxon>Streptococcus</taxon>
    </lineage>
</organism>